<gene>
    <name evidence="1" type="primary">eno</name>
    <name type="ordered locus">Nmul_A1228</name>
</gene>
<dbReference type="EC" id="4.2.1.11" evidence="1"/>
<dbReference type="EMBL" id="CP000103">
    <property type="protein sequence ID" value="ABB74531.1"/>
    <property type="molecule type" value="Genomic_DNA"/>
</dbReference>
<dbReference type="RefSeq" id="WP_011380572.1">
    <property type="nucleotide sequence ID" value="NC_007614.1"/>
</dbReference>
<dbReference type="SMR" id="Q2Y9P0"/>
<dbReference type="STRING" id="323848.Nmul_A1228"/>
<dbReference type="KEGG" id="nmu:Nmul_A1228"/>
<dbReference type="eggNOG" id="COG0148">
    <property type="taxonomic scope" value="Bacteria"/>
</dbReference>
<dbReference type="HOGENOM" id="CLU_031223_2_1_4"/>
<dbReference type="OrthoDB" id="9804716at2"/>
<dbReference type="UniPathway" id="UPA00109">
    <property type="reaction ID" value="UER00187"/>
</dbReference>
<dbReference type="Proteomes" id="UP000002718">
    <property type="component" value="Chromosome"/>
</dbReference>
<dbReference type="GO" id="GO:0009986">
    <property type="term" value="C:cell surface"/>
    <property type="evidence" value="ECO:0007669"/>
    <property type="project" value="UniProtKB-SubCell"/>
</dbReference>
<dbReference type="GO" id="GO:0005576">
    <property type="term" value="C:extracellular region"/>
    <property type="evidence" value="ECO:0007669"/>
    <property type="project" value="UniProtKB-SubCell"/>
</dbReference>
<dbReference type="GO" id="GO:0000015">
    <property type="term" value="C:phosphopyruvate hydratase complex"/>
    <property type="evidence" value="ECO:0007669"/>
    <property type="project" value="InterPro"/>
</dbReference>
<dbReference type="GO" id="GO:0000287">
    <property type="term" value="F:magnesium ion binding"/>
    <property type="evidence" value="ECO:0007669"/>
    <property type="project" value="UniProtKB-UniRule"/>
</dbReference>
<dbReference type="GO" id="GO:0004634">
    <property type="term" value="F:phosphopyruvate hydratase activity"/>
    <property type="evidence" value="ECO:0007669"/>
    <property type="project" value="UniProtKB-UniRule"/>
</dbReference>
<dbReference type="GO" id="GO:0006096">
    <property type="term" value="P:glycolytic process"/>
    <property type="evidence" value="ECO:0007669"/>
    <property type="project" value="UniProtKB-UniRule"/>
</dbReference>
<dbReference type="CDD" id="cd03313">
    <property type="entry name" value="enolase"/>
    <property type="match status" value="1"/>
</dbReference>
<dbReference type="FunFam" id="3.20.20.120:FF:000001">
    <property type="entry name" value="Enolase"/>
    <property type="match status" value="1"/>
</dbReference>
<dbReference type="FunFam" id="3.30.390.10:FF:000001">
    <property type="entry name" value="Enolase"/>
    <property type="match status" value="1"/>
</dbReference>
<dbReference type="Gene3D" id="3.20.20.120">
    <property type="entry name" value="Enolase-like C-terminal domain"/>
    <property type="match status" value="1"/>
</dbReference>
<dbReference type="Gene3D" id="3.30.390.10">
    <property type="entry name" value="Enolase-like, N-terminal domain"/>
    <property type="match status" value="1"/>
</dbReference>
<dbReference type="HAMAP" id="MF_00318">
    <property type="entry name" value="Enolase"/>
    <property type="match status" value="1"/>
</dbReference>
<dbReference type="InterPro" id="IPR000941">
    <property type="entry name" value="Enolase"/>
</dbReference>
<dbReference type="InterPro" id="IPR036849">
    <property type="entry name" value="Enolase-like_C_sf"/>
</dbReference>
<dbReference type="InterPro" id="IPR029017">
    <property type="entry name" value="Enolase-like_N"/>
</dbReference>
<dbReference type="InterPro" id="IPR020810">
    <property type="entry name" value="Enolase_C"/>
</dbReference>
<dbReference type="InterPro" id="IPR020809">
    <property type="entry name" value="Enolase_CS"/>
</dbReference>
<dbReference type="InterPro" id="IPR020811">
    <property type="entry name" value="Enolase_N"/>
</dbReference>
<dbReference type="NCBIfam" id="TIGR01060">
    <property type="entry name" value="eno"/>
    <property type="match status" value="1"/>
</dbReference>
<dbReference type="PANTHER" id="PTHR11902">
    <property type="entry name" value="ENOLASE"/>
    <property type="match status" value="1"/>
</dbReference>
<dbReference type="PANTHER" id="PTHR11902:SF1">
    <property type="entry name" value="ENOLASE"/>
    <property type="match status" value="1"/>
</dbReference>
<dbReference type="Pfam" id="PF00113">
    <property type="entry name" value="Enolase_C"/>
    <property type="match status" value="1"/>
</dbReference>
<dbReference type="Pfam" id="PF03952">
    <property type="entry name" value="Enolase_N"/>
    <property type="match status" value="1"/>
</dbReference>
<dbReference type="PIRSF" id="PIRSF001400">
    <property type="entry name" value="Enolase"/>
    <property type="match status" value="1"/>
</dbReference>
<dbReference type="PRINTS" id="PR00148">
    <property type="entry name" value="ENOLASE"/>
</dbReference>
<dbReference type="SFLD" id="SFLDF00002">
    <property type="entry name" value="enolase"/>
    <property type="match status" value="1"/>
</dbReference>
<dbReference type="SFLD" id="SFLDG00178">
    <property type="entry name" value="enolase"/>
    <property type="match status" value="1"/>
</dbReference>
<dbReference type="SMART" id="SM01192">
    <property type="entry name" value="Enolase_C"/>
    <property type="match status" value="1"/>
</dbReference>
<dbReference type="SMART" id="SM01193">
    <property type="entry name" value="Enolase_N"/>
    <property type="match status" value="1"/>
</dbReference>
<dbReference type="SUPFAM" id="SSF51604">
    <property type="entry name" value="Enolase C-terminal domain-like"/>
    <property type="match status" value="1"/>
</dbReference>
<dbReference type="SUPFAM" id="SSF54826">
    <property type="entry name" value="Enolase N-terminal domain-like"/>
    <property type="match status" value="1"/>
</dbReference>
<dbReference type="PROSITE" id="PS00164">
    <property type="entry name" value="ENOLASE"/>
    <property type="match status" value="1"/>
</dbReference>
<name>ENO_NITMU</name>
<evidence type="ECO:0000255" key="1">
    <source>
        <dbReference type="HAMAP-Rule" id="MF_00318"/>
    </source>
</evidence>
<comment type="function">
    <text evidence="1">Catalyzes the reversible conversion of 2-phosphoglycerate (2-PG) into phosphoenolpyruvate (PEP). It is essential for the degradation of carbohydrates via glycolysis.</text>
</comment>
<comment type="catalytic activity">
    <reaction evidence="1">
        <text>(2R)-2-phosphoglycerate = phosphoenolpyruvate + H2O</text>
        <dbReference type="Rhea" id="RHEA:10164"/>
        <dbReference type="ChEBI" id="CHEBI:15377"/>
        <dbReference type="ChEBI" id="CHEBI:58289"/>
        <dbReference type="ChEBI" id="CHEBI:58702"/>
        <dbReference type="EC" id="4.2.1.11"/>
    </reaction>
</comment>
<comment type="cofactor">
    <cofactor evidence="1">
        <name>Mg(2+)</name>
        <dbReference type="ChEBI" id="CHEBI:18420"/>
    </cofactor>
    <text evidence="1">Binds a second Mg(2+) ion via substrate during catalysis.</text>
</comment>
<comment type="pathway">
    <text evidence="1">Carbohydrate degradation; glycolysis; pyruvate from D-glyceraldehyde 3-phosphate: step 4/5.</text>
</comment>
<comment type="subcellular location">
    <subcellularLocation>
        <location evidence="1">Cytoplasm</location>
    </subcellularLocation>
    <subcellularLocation>
        <location evidence="1">Secreted</location>
    </subcellularLocation>
    <subcellularLocation>
        <location evidence="1">Cell surface</location>
    </subcellularLocation>
    <text evidence="1">Fractions of enolase are present in both the cytoplasm and on the cell surface.</text>
</comment>
<comment type="similarity">
    <text evidence="1">Belongs to the enolase family.</text>
</comment>
<protein>
    <recommendedName>
        <fullName evidence="1">Enolase</fullName>
        <ecNumber evidence="1">4.2.1.11</ecNumber>
    </recommendedName>
    <alternativeName>
        <fullName evidence="1">2-phospho-D-glycerate hydro-lyase</fullName>
    </alternativeName>
    <alternativeName>
        <fullName evidence="1">2-phosphoglycerate dehydratase</fullName>
    </alternativeName>
</protein>
<accession>Q2Y9P0</accession>
<keyword id="KW-0963">Cytoplasm</keyword>
<keyword id="KW-0324">Glycolysis</keyword>
<keyword id="KW-0456">Lyase</keyword>
<keyword id="KW-0460">Magnesium</keyword>
<keyword id="KW-0479">Metal-binding</keyword>
<keyword id="KW-1185">Reference proteome</keyword>
<keyword id="KW-0964">Secreted</keyword>
<sequence length="427" mass="45547">MSAIVDVIAREILDSRGNPTVEADVLLESGVLGRAAVPSGASVGTREAVELRDEDAQRYFGKGVLKAVENVNTEISEAIMGLDAMDQAFIDRTLIDLDGSGNKSRLGANAILSVSLAVAKAAAEECGLPLYRYVGGAGSMSMPVPMMNVINGGAHANNNIDMQEFVIIPLGAQSFREALRCGAEVFHTLKGLLDKRGMHTAVGDEGGFAPDLPNNEAALQLIVEAIENAGYLPGPDVAIGLDCAASEFYRDGKYHLESDGLALDSTQFADYLATWIDKYPIISIEDGMSEHDWDGWKLLTSRLGKSVQLVGDDIFVTNASILKEGVSQGIANSILIKLNQIGTLTEALYAIESAKRAGYTAVVSHRSGETEDTTIADIAVASNALQIKTGSLSRSDRLAKYNQLLRIEEDLGDTASYPGRGAFYQLK</sequence>
<feature type="chain" id="PRO_0000267066" description="Enolase">
    <location>
        <begin position="1"/>
        <end position="427"/>
    </location>
</feature>
<feature type="active site" description="Proton donor" evidence="1">
    <location>
        <position position="205"/>
    </location>
</feature>
<feature type="active site" description="Proton acceptor" evidence="1">
    <location>
        <position position="337"/>
    </location>
</feature>
<feature type="binding site" evidence="1">
    <location>
        <position position="163"/>
    </location>
    <ligand>
        <name>(2R)-2-phosphoglycerate</name>
        <dbReference type="ChEBI" id="CHEBI:58289"/>
    </ligand>
</feature>
<feature type="binding site" evidence="1">
    <location>
        <position position="242"/>
    </location>
    <ligand>
        <name>Mg(2+)</name>
        <dbReference type="ChEBI" id="CHEBI:18420"/>
    </ligand>
</feature>
<feature type="binding site" evidence="1">
    <location>
        <position position="285"/>
    </location>
    <ligand>
        <name>Mg(2+)</name>
        <dbReference type="ChEBI" id="CHEBI:18420"/>
    </ligand>
</feature>
<feature type="binding site" evidence="1">
    <location>
        <position position="312"/>
    </location>
    <ligand>
        <name>Mg(2+)</name>
        <dbReference type="ChEBI" id="CHEBI:18420"/>
    </ligand>
</feature>
<feature type="binding site" evidence="1">
    <location>
        <position position="337"/>
    </location>
    <ligand>
        <name>(2R)-2-phosphoglycerate</name>
        <dbReference type="ChEBI" id="CHEBI:58289"/>
    </ligand>
</feature>
<feature type="binding site" evidence="1">
    <location>
        <position position="366"/>
    </location>
    <ligand>
        <name>(2R)-2-phosphoglycerate</name>
        <dbReference type="ChEBI" id="CHEBI:58289"/>
    </ligand>
</feature>
<feature type="binding site" evidence="1">
    <location>
        <position position="367"/>
    </location>
    <ligand>
        <name>(2R)-2-phosphoglycerate</name>
        <dbReference type="ChEBI" id="CHEBI:58289"/>
    </ligand>
</feature>
<feature type="binding site" evidence="1">
    <location>
        <position position="388"/>
    </location>
    <ligand>
        <name>(2R)-2-phosphoglycerate</name>
        <dbReference type="ChEBI" id="CHEBI:58289"/>
    </ligand>
</feature>
<proteinExistence type="inferred from homology"/>
<reference key="1">
    <citation type="submission" date="2005-08" db="EMBL/GenBank/DDBJ databases">
        <title>Complete sequence of chromosome 1 of Nitrosospira multiformis ATCC 25196.</title>
        <authorList>
            <person name="Copeland A."/>
            <person name="Lucas S."/>
            <person name="Lapidus A."/>
            <person name="Barry K."/>
            <person name="Detter J.C."/>
            <person name="Glavina T."/>
            <person name="Hammon N."/>
            <person name="Israni S."/>
            <person name="Pitluck S."/>
            <person name="Chain P."/>
            <person name="Malfatti S."/>
            <person name="Shin M."/>
            <person name="Vergez L."/>
            <person name="Schmutz J."/>
            <person name="Larimer F."/>
            <person name="Land M."/>
            <person name="Hauser L."/>
            <person name="Kyrpides N."/>
            <person name="Lykidis A."/>
            <person name="Richardson P."/>
        </authorList>
    </citation>
    <scope>NUCLEOTIDE SEQUENCE [LARGE SCALE GENOMIC DNA]</scope>
    <source>
        <strain>ATCC 25196 / NCIMB 11849 / C 71</strain>
    </source>
</reference>
<organism>
    <name type="scientific">Nitrosospira multiformis (strain ATCC 25196 / NCIMB 11849 / C 71)</name>
    <dbReference type="NCBI Taxonomy" id="323848"/>
    <lineage>
        <taxon>Bacteria</taxon>
        <taxon>Pseudomonadati</taxon>
        <taxon>Pseudomonadota</taxon>
        <taxon>Betaproteobacteria</taxon>
        <taxon>Nitrosomonadales</taxon>
        <taxon>Nitrosomonadaceae</taxon>
        <taxon>Nitrosospira</taxon>
    </lineage>
</organism>